<comment type="function">
    <text evidence="1">One of the primary rRNA binding proteins, it binds directly to 16S rRNA where it nucleates assembly of the head domain of the 30S subunit. Is located at the subunit interface close to the decoding center, probably blocks exit of the E-site tRNA.</text>
</comment>
<comment type="subunit">
    <text evidence="1">Part of the 30S ribosomal subunit. Contacts proteins S9 and S11.</text>
</comment>
<comment type="similarity">
    <text evidence="1">Belongs to the universal ribosomal protein uS7 family.</text>
</comment>
<organism>
    <name type="scientific">Chlorobaculum tepidum (strain ATCC 49652 / DSM 12025 / NBRC 103806 / TLS)</name>
    <name type="common">Chlorobium tepidum</name>
    <dbReference type="NCBI Taxonomy" id="194439"/>
    <lineage>
        <taxon>Bacteria</taxon>
        <taxon>Pseudomonadati</taxon>
        <taxon>Chlorobiota</taxon>
        <taxon>Chlorobiia</taxon>
        <taxon>Chlorobiales</taxon>
        <taxon>Chlorobiaceae</taxon>
        <taxon>Chlorobaculum</taxon>
    </lineage>
</organism>
<protein>
    <recommendedName>
        <fullName evidence="1">Small ribosomal subunit protein uS7</fullName>
    </recommendedName>
    <alternativeName>
        <fullName evidence="2">30S ribosomal protein S7</fullName>
    </alternativeName>
</protein>
<gene>
    <name evidence="1" type="primary">rpsG</name>
    <name type="ordered locus">CT2193</name>
</gene>
<proteinExistence type="inferred from homology"/>
<name>RS7_CHLTE</name>
<feature type="chain" id="PRO_0000124246" description="Small ribosomal subunit protein uS7">
    <location>
        <begin position="1"/>
        <end position="156"/>
    </location>
</feature>
<sequence>MAKKGSGYGPRGGDFRYNDEAVARLINAIMLDGKKVVATKIVYDAFDIIANKVEGGDALEVFRKAMGNVAPLVEVRSKRVGGATYQIPMEVPASRRTALAFRWIKQFAARRGGRSMAEKLAAELLDASNEQGASVKKRDEVHRMAEANKAFAHFRF</sequence>
<dbReference type="EMBL" id="AE006470">
    <property type="protein sequence ID" value="AAM73409.1"/>
    <property type="molecule type" value="Genomic_DNA"/>
</dbReference>
<dbReference type="RefSeq" id="NP_663067.1">
    <property type="nucleotide sequence ID" value="NC_002932.3"/>
</dbReference>
<dbReference type="RefSeq" id="WP_010933846.1">
    <property type="nucleotide sequence ID" value="NC_002932.3"/>
</dbReference>
<dbReference type="SMR" id="P59060"/>
<dbReference type="STRING" id="194439.CT2193"/>
<dbReference type="EnsemblBacteria" id="AAM73409">
    <property type="protein sequence ID" value="AAM73409"/>
    <property type="gene ID" value="CT2193"/>
</dbReference>
<dbReference type="KEGG" id="cte:CT2193"/>
<dbReference type="PATRIC" id="fig|194439.7.peg.1992"/>
<dbReference type="eggNOG" id="COG0049">
    <property type="taxonomic scope" value="Bacteria"/>
</dbReference>
<dbReference type="HOGENOM" id="CLU_072226_1_1_10"/>
<dbReference type="OrthoDB" id="9807653at2"/>
<dbReference type="Proteomes" id="UP000001007">
    <property type="component" value="Chromosome"/>
</dbReference>
<dbReference type="GO" id="GO:0015935">
    <property type="term" value="C:small ribosomal subunit"/>
    <property type="evidence" value="ECO:0007669"/>
    <property type="project" value="InterPro"/>
</dbReference>
<dbReference type="GO" id="GO:0019843">
    <property type="term" value="F:rRNA binding"/>
    <property type="evidence" value="ECO:0007669"/>
    <property type="project" value="UniProtKB-UniRule"/>
</dbReference>
<dbReference type="GO" id="GO:0003735">
    <property type="term" value="F:structural constituent of ribosome"/>
    <property type="evidence" value="ECO:0007669"/>
    <property type="project" value="InterPro"/>
</dbReference>
<dbReference type="GO" id="GO:0000049">
    <property type="term" value="F:tRNA binding"/>
    <property type="evidence" value="ECO:0007669"/>
    <property type="project" value="UniProtKB-UniRule"/>
</dbReference>
<dbReference type="GO" id="GO:0006412">
    <property type="term" value="P:translation"/>
    <property type="evidence" value="ECO:0007669"/>
    <property type="project" value="UniProtKB-UniRule"/>
</dbReference>
<dbReference type="CDD" id="cd14869">
    <property type="entry name" value="uS7_Bacteria"/>
    <property type="match status" value="1"/>
</dbReference>
<dbReference type="FunFam" id="1.10.455.10:FF:000001">
    <property type="entry name" value="30S ribosomal protein S7"/>
    <property type="match status" value="1"/>
</dbReference>
<dbReference type="Gene3D" id="1.10.455.10">
    <property type="entry name" value="Ribosomal protein S7 domain"/>
    <property type="match status" value="1"/>
</dbReference>
<dbReference type="HAMAP" id="MF_00480_B">
    <property type="entry name" value="Ribosomal_uS7_B"/>
    <property type="match status" value="1"/>
</dbReference>
<dbReference type="InterPro" id="IPR000235">
    <property type="entry name" value="Ribosomal_uS7"/>
</dbReference>
<dbReference type="InterPro" id="IPR005717">
    <property type="entry name" value="Ribosomal_uS7_bac/org-type"/>
</dbReference>
<dbReference type="InterPro" id="IPR023798">
    <property type="entry name" value="Ribosomal_uS7_dom"/>
</dbReference>
<dbReference type="InterPro" id="IPR036823">
    <property type="entry name" value="Ribosomal_uS7_dom_sf"/>
</dbReference>
<dbReference type="NCBIfam" id="TIGR01029">
    <property type="entry name" value="rpsG_bact"/>
    <property type="match status" value="1"/>
</dbReference>
<dbReference type="PANTHER" id="PTHR11205">
    <property type="entry name" value="RIBOSOMAL PROTEIN S7"/>
    <property type="match status" value="1"/>
</dbReference>
<dbReference type="Pfam" id="PF00177">
    <property type="entry name" value="Ribosomal_S7"/>
    <property type="match status" value="1"/>
</dbReference>
<dbReference type="PIRSF" id="PIRSF002122">
    <property type="entry name" value="RPS7p_RPS7a_RPS5e_RPS7o"/>
    <property type="match status" value="1"/>
</dbReference>
<dbReference type="SUPFAM" id="SSF47973">
    <property type="entry name" value="Ribosomal protein S7"/>
    <property type="match status" value="1"/>
</dbReference>
<accession>P59060</accession>
<evidence type="ECO:0000255" key="1">
    <source>
        <dbReference type="HAMAP-Rule" id="MF_00480"/>
    </source>
</evidence>
<evidence type="ECO:0000305" key="2"/>
<reference key="1">
    <citation type="journal article" date="2002" name="Proc. Natl. Acad. Sci. U.S.A.">
        <title>The complete genome sequence of Chlorobium tepidum TLS, a photosynthetic, anaerobic, green-sulfur bacterium.</title>
        <authorList>
            <person name="Eisen J.A."/>
            <person name="Nelson K.E."/>
            <person name="Paulsen I.T."/>
            <person name="Heidelberg J.F."/>
            <person name="Wu M."/>
            <person name="Dodson R.J."/>
            <person name="DeBoy R.T."/>
            <person name="Gwinn M.L."/>
            <person name="Nelson W.C."/>
            <person name="Haft D.H."/>
            <person name="Hickey E.K."/>
            <person name="Peterson J.D."/>
            <person name="Durkin A.S."/>
            <person name="Kolonay J.F."/>
            <person name="Yang F."/>
            <person name="Holt I.E."/>
            <person name="Umayam L.A."/>
            <person name="Mason T.M."/>
            <person name="Brenner M."/>
            <person name="Shea T.P."/>
            <person name="Parksey D.S."/>
            <person name="Nierman W.C."/>
            <person name="Feldblyum T.V."/>
            <person name="Hansen C.L."/>
            <person name="Craven M.B."/>
            <person name="Radune D."/>
            <person name="Vamathevan J.J."/>
            <person name="Khouri H.M."/>
            <person name="White O."/>
            <person name="Gruber T.M."/>
            <person name="Ketchum K.A."/>
            <person name="Venter J.C."/>
            <person name="Tettelin H."/>
            <person name="Bryant D.A."/>
            <person name="Fraser C.M."/>
        </authorList>
    </citation>
    <scope>NUCLEOTIDE SEQUENCE [LARGE SCALE GENOMIC DNA]</scope>
    <source>
        <strain>ATCC 49652 / DSM 12025 / NBRC 103806 / TLS</strain>
    </source>
</reference>
<keyword id="KW-1185">Reference proteome</keyword>
<keyword id="KW-0687">Ribonucleoprotein</keyword>
<keyword id="KW-0689">Ribosomal protein</keyword>
<keyword id="KW-0694">RNA-binding</keyword>
<keyword id="KW-0699">rRNA-binding</keyword>
<keyword id="KW-0820">tRNA-binding</keyword>